<accession>Q7VA53</accession>
<organism>
    <name type="scientific">Prochlorococcus marinus (strain SARG / CCMP1375 / SS120)</name>
    <dbReference type="NCBI Taxonomy" id="167539"/>
    <lineage>
        <taxon>Bacteria</taxon>
        <taxon>Bacillati</taxon>
        <taxon>Cyanobacteriota</taxon>
        <taxon>Cyanophyceae</taxon>
        <taxon>Synechococcales</taxon>
        <taxon>Prochlorococcaceae</taxon>
        <taxon>Prochlorococcus</taxon>
    </lineage>
</organism>
<name>QUEF_PROMA</name>
<sequence length="135" mass="15466">MTISEKSNESELYGERFISDAEIVCFPNPSPNRTYEISIELPEFTCQCPFSGYPDFAIIRLLYQPGEKVLELKSMKLYVNSFRNRKISHEEVANKMLDDFVAAANPSWMQLEADFNPRGNVHTVVRVSHGLKNNC</sequence>
<gene>
    <name evidence="1" type="primary">queF</name>
    <name type="ordered locus">Pro_1614</name>
</gene>
<evidence type="ECO:0000255" key="1">
    <source>
        <dbReference type="HAMAP-Rule" id="MF_00818"/>
    </source>
</evidence>
<protein>
    <recommendedName>
        <fullName evidence="1">NADPH-dependent 7-cyano-7-deazaguanine reductase</fullName>
        <ecNumber evidence="1">1.7.1.13</ecNumber>
    </recommendedName>
    <alternativeName>
        <fullName evidence="1">7-cyano-7-carbaguanine reductase</fullName>
    </alternativeName>
    <alternativeName>
        <fullName evidence="1">NADPH-dependent nitrile oxidoreductase</fullName>
    </alternativeName>
    <alternativeName>
        <fullName evidence="1">PreQ(0) reductase</fullName>
    </alternativeName>
</protein>
<reference key="1">
    <citation type="journal article" date="2003" name="Proc. Natl. Acad. Sci. U.S.A.">
        <title>Genome sequence of the cyanobacterium Prochlorococcus marinus SS120, a nearly minimal oxyphototrophic genome.</title>
        <authorList>
            <person name="Dufresne A."/>
            <person name="Salanoubat M."/>
            <person name="Partensky F."/>
            <person name="Artiguenave F."/>
            <person name="Axmann I.M."/>
            <person name="Barbe V."/>
            <person name="Duprat S."/>
            <person name="Galperin M.Y."/>
            <person name="Koonin E.V."/>
            <person name="Le Gall F."/>
            <person name="Makarova K.S."/>
            <person name="Ostrowski M."/>
            <person name="Oztas S."/>
            <person name="Robert C."/>
            <person name="Rogozin I.B."/>
            <person name="Scanlan D.J."/>
            <person name="Tandeau de Marsac N."/>
            <person name="Weissenbach J."/>
            <person name="Wincker P."/>
            <person name="Wolf Y.I."/>
            <person name="Hess W.R."/>
        </authorList>
    </citation>
    <scope>NUCLEOTIDE SEQUENCE [LARGE SCALE GENOMIC DNA]</scope>
    <source>
        <strain>SARG / CCMP1375 / SS120</strain>
    </source>
</reference>
<feature type="chain" id="PRO_0000162986" description="NADPH-dependent 7-cyano-7-deazaguanine reductase">
    <location>
        <begin position="1"/>
        <end position="135"/>
    </location>
</feature>
<feature type="active site" description="Thioimide intermediate" evidence="1">
    <location>
        <position position="48"/>
    </location>
</feature>
<feature type="active site" description="Proton donor" evidence="1">
    <location>
        <position position="55"/>
    </location>
</feature>
<feature type="binding site" evidence="1">
    <location>
        <begin position="70"/>
        <end position="72"/>
    </location>
    <ligand>
        <name>substrate</name>
    </ligand>
</feature>
<feature type="binding site" evidence="1">
    <location>
        <begin position="89"/>
        <end position="90"/>
    </location>
    <ligand>
        <name>substrate</name>
    </ligand>
</feature>
<proteinExistence type="inferred from homology"/>
<keyword id="KW-0963">Cytoplasm</keyword>
<keyword id="KW-0521">NADP</keyword>
<keyword id="KW-0560">Oxidoreductase</keyword>
<keyword id="KW-0671">Queuosine biosynthesis</keyword>
<keyword id="KW-1185">Reference proteome</keyword>
<comment type="function">
    <text evidence="1">Catalyzes the NADPH-dependent reduction of 7-cyano-7-deazaguanine (preQ0) to 7-aminomethyl-7-deazaguanine (preQ1).</text>
</comment>
<comment type="catalytic activity">
    <reaction evidence="1">
        <text>7-aminomethyl-7-carbaguanine + 2 NADP(+) = 7-cyano-7-deazaguanine + 2 NADPH + 3 H(+)</text>
        <dbReference type="Rhea" id="RHEA:13409"/>
        <dbReference type="ChEBI" id="CHEBI:15378"/>
        <dbReference type="ChEBI" id="CHEBI:45075"/>
        <dbReference type="ChEBI" id="CHEBI:57783"/>
        <dbReference type="ChEBI" id="CHEBI:58349"/>
        <dbReference type="ChEBI" id="CHEBI:58703"/>
        <dbReference type="EC" id="1.7.1.13"/>
    </reaction>
</comment>
<comment type="pathway">
    <text evidence="1">tRNA modification; tRNA-queuosine biosynthesis.</text>
</comment>
<comment type="subcellular location">
    <subcellularLocation>
        <location evidence="1">Cytoplasm</location>
    </subcellularLocation>
</comment>
<comment type="similarity">
    <text evidence="1">Belongs to the GTP cyclohydrolase I family. QueF type 1 subfamily.</text>
</comment>
<dbReference type="EC" id="1.7.1.13" evidence="1"/>
<dbReference type="EMBL" id="AE017126">
    <property type="protein sequence ID" value="AAQ00658.1"/>
    <property type="molecule type" value="Genomic_DNA"/>
</dbReference>
<dbReference type="RefSeq" id="NP_876005.1">
    <property type="nucleotide sequence ID" value="NC_005042.1"/>
</dbReference>
<dbReference type="RefSeq" id="WP_011125764.1">
    <property type="nucleotide sequence ID" value="NC_005042.1"/>
</dbReference>
<dbReference type="SMR" id="Q7VA53"/>
<dbReference type="STRING" id="167539.Pro_1614"/>
<dbReference type="EnsemblBacteria" id="AAQ00658">
    <property type="protein sequence ID" value="AAQ00658"/>
    <property type="gene ID" value="Pro_1614"/>
</dbReference>
<dbReference type="KEGG" id="pma:Pro_1614"/>
<dbReference type="PATRIC" id="fig|167539.5.peg.1706"/>
<dbReference type="eggNOG" id="COG0780">
    <property type="taxonomic scope" value="Bacteria"/>
</dbReference>
<dbReference type="HOGENOM" id="CLU_102489_1_1_3"/>
<dbReference type="OrthoDB" id="9795077at2"/>
<dbReference type="UniPathway" id="UPA00392"/>
<dbReference type="Proteomes" id="UP000001420">
    <property type="component" value="Chromosome"/>
</dbReference>
<dbReference type="GO" id="GO:0005737">
    <property type="term" value="C:cytoplasm"/>
    <property type="evidence" value="ECO:0007669"/>
    <property type="project" value="UniProtKB-SubCell"/>
</dbReference>
<dbReference type="GO" id="GO:0033739">
    <property type="term" value="F:preQ1 synthase activity"/>
    <property type="evidence" value="ECO:0007669"/>
    <property type="project" value="UniProtKB-UniRule"/>
</dbReference>
<dbReference type="GO" id="GO:0008616">
    <property type="term" value="P:queuosine biosynthetic process"/>
    <property type="evidence" value="ECO:0007669"/>
    <property type="project" value="UniProtKB-UniRule"/>
</dbReference>
<dbReference type="GO" id="GO:0006400">
    <property type="term" value="P:tRNA modification"/>
    <property type="evidence" value="ECO:0007669"/>
    <property type="project" value="UniProtKB-UniRule"/>
</dbReference>
<dbReference type="Gene3D" id="3.30.1130.10">
    <property type="match status" value="1"/>
</dbReference>
<dbReference type="HAMAP" id="MF_00818">
    <property type="entry name" value="QueF_type1"/>
    <property type="match status" value="1"/>
</dbReference>
<dbReference type="InterPro" id="IPR043133">
    <property type="entry name" value="GTP-CH-I_C/QueF"/>
</dbReference>
<dbReference type="InterPro" id="IPR050084">
    <property type="entry name" value="NADPH_dep_7-cyano-7-deazaG_red"/>
</dbReference>
<dbReference type="InterPro" id="IPR029500">
    <property type="entry name" value="QueF"/>
</dbReference>
<dbReference type="InterPro" id="IPR016856">
    <property type="entry name" value="QueF_type1"/>
</dbReference>
<dbReference type="NCBIfam" id="TIGR03139">
    <property type="entry name" value="QueF-II"/>
    <property type="match status" value="1"/>
</dbReference>
<dbReference type="PANTHER" id="PTHR34354">
    <property type="entry name" value="NADPH-DEPENDENT 7-CYANO-7-DEAZAGUANINE REDUCTASE"/>
    <property type="match status" value="1"/>
</dbReference>
<dbReference type="PANTHER" id="PTHR34354:SF1">
    <property type="entry name" value="NADPH-DEPENDENT 7-CYANO-7-DEAZAGUANINE REDUCTASE"/>
    <property type="match status" value="1"/>
</dbReference>
<dbReference type="Pfam" id="PF14489">
    <property type="entry name" value="QueF"/>
    <property type="match status" value="1"/>
</dbReference>
<dbReference type="PIRSF" id="PIRSF027377">
    <property type="entry name" value="Nitrile_oxidored_QueF"/>
    <property type="match status" value="1"/>
</dbReference>
<dbReference type="SUPFAM" id="SSF55620">
    <property type="entry name" value="Tetrahydrobiopterin biosynthesis enzymes-like"/>
    <property type="match status" value="1"/>
</dbReference>